<name>RHAD_SHIBS</name>
<protein>
    <recommendedName>
        <fullName evidence="1">Rhamnulose-1-phosphate aldolase</fullName>
        <ecNumber evidence="1">4.1.2.19</ecNumber>
    </recommendedName>
</protein>
<gene>
    <name evidence="1" type="primary">rhaD</name>
    <name type="ordered locus">SBO_3920</name>
</gene>
<organism>
    <name type="scientific">Shigella boydii serotype 4 (strain Sb227)</name>
    <dbReference type="NCBI Taxonomy" id="300268"/>
    <lineage>
        <taxon>Bacteria</taxon>
        <taxon>Pseudomonadati</taxon>
        <taxon>Pseudomonadota</taxon>
        <taxon>Gammaproteobacteria</taxon>
        <taxon>Enterobacterales</taxon>
        <taxon>Enterobacteriaceae</taxon>
        <taxon>Shigella</taxon>
    </lineage>
</organism>
<dbReference type="EC" id="4.1.2.19" evidence="1"/>
<dbReference type="EMBL" id="CP000036">
    <property type="protein sequence ID" value="ABB68371.1"/>
    <property type="molecule type" value="Genomic_DNA"/>
</dbReference>
<dbReference type="RefSeq" id="WP_001179770.1">
    <property type="nucleotide sequence ID" value="NC_007613.1"/>
</dbReference>
<dbReference type="SMR" id="Q31U87"/>
<dbReference type="KEGG" id="sbo:SBO_3920"/>
<dbReference type="HOGENOM" id="CLU_076831_0_0_6"/>
<dbReference type="UniPathway" id="UPA00541">
    <property type="reaction ID" value="UER00603"/>
</dbReference>
<dbReference type="Proteomes" id="UP000007067">
    <property type="component" value="Chromosome"/>
</dbReference>
<dbReference type="GO" id="GO:0005829">
    <property type="term" value="C:cytosol"/>
    <property type="evidence" value="ECO:0007669"/>
    <property type="project" value="TreeGrafter"/>
</dbReference>
<dbReference type="GO" id="GO:0046872">
    <property type="term" value="F:metal ion binding"/>
    <property type="evidence" value="ECO:0007669"/>
    <property type="project" value="UniProtKB-KW"/>
</dbReference>
<dbReference type="GO" id="GO:0008994">
    <property type="term" value="F:rhamnulose-1-phosphate aldolase activity"/>
    <property type="evidence" value="ECO:0007669"/>
    <property type="project" value="UniProtKB-UniRule"/>
</dbReference>
<dbReference type="GO" id="GO:0019323">
    <property type="term" value="P:pentose catabolic process"/>
    <property type="evidence" value="ECO:0007669"/>
    <property type="project" value="TreeGrafter"/>
</dbReference>
<dbReference type="GO" id="GO:0019301">
    <property type="term" value="P:rhamnose catabolic process"/>
    <property type="evidence" value="ECO:0007669"/>
    <property type="project" value="UniProtKB-UniRule"/>
</dbReference>
<dbReference type="CDD" id="cd00398">
    <property type="entry name" value="Aldolase_II"/>
    <property type="match status" value="1"/>
</dbReference>
<dbReference type="FunFam" id="3.40.225.10:FF:000006">
    <property type="entry name" value="Rhamnulose-1-phosphate aldolase"/>
    <property type="match status" value="1"/>
</dbReference>
<dbReference type="Gene3D" id="3.40.225.10">
    <property type="entry name" value="Class II aldolase/adducin N-terminal domain"/>
    <property type="match status" value="1"/>
</dbReference>
<dbReference type="HAMAP" id="MF_00770">
    <property type="entry name" value="RhaD"/>
    <property type="match status" value="1"/>
</dbReference>
<dbReference type="InterPro" id="IPR050197">
    <property type="entry name" value="Aldolase_class_II_sugar_metab"/>
</dbReference>
<dbReference type="InterPro" id="IPR001303">
    <property type="entry name" value="Aldolase_II/adducin_N"/>
</dbReference>
<dbReference type="InterPro" id="IPR036409">
    <property type="entry name" value="Aldolase_II/adducin_N_sf"/>
</dbReference>
<dbReference type="InterPro" id="IPR013447">
    <property type="entry name" value="Rhamnulose-1-P_Aldolase"/>
</dbReference>
<dbReference type="NCBIfam" id="NF002963">
    <property type="entry name" value="PRK03634.1"/>
    <property type="match status" value="1"/>
</dbReference>
<dbReference type="NCBIfam" id="TIGR02624">
    <property type="entry name" value="rhamnu_1P_ald"/>
    <property type="match status" value="1"/>
</dbReference>
<dbReference type="PANTHER" id="PTHR22789">
    <property type="entry name" value="FUCULOSE PHOSPHATE ALDOLASE"/>
    <property type="match status" value="1"/>
</dbReference>
<dbReference type="PANTHER" id="PTHR22789:SF16">
    <property type="entry name" value="RHAMNULOSE-1-PHOSPHATE ALDOLASE"/>
    <property type="match status" value="1"/>
</dbReference>
<dbReference type="Pfam" id="PF00596">
    <property type="entry name" value="Aldolase_II"/>
    <property type="match status" value="1"/>
</dbReference>
<dbReference type="SMART" id="SM01007">
    <property type="entry name" value="Aldolase_II"/>
    <property type="match status" value="1"/>
</dbReference>
<dbReference type="SUPFAM" id="SSF53639">
    <property type="entry name" value="AraD/HMP-PK domain-like"/>
    <property type="match status" value="1"/>
</dbReference>
<accession>Q31U87</accession>
<feature type="chain" id="PRO_1000017343" description="Rhamnulose-1-phosphate aldolase">
    <location>
        <begin position="1"/>
        <end position="274"/>
    </location>
</feature>
<feature type="active site" evidence="1">
    <location>
        <position position="117"/>
    </location>
</feature>
<feature type="binding site" evidence="1">
    <location>
        <position position="141"/>
    </location>
    <ligand>
        <name>Zn(2+)</name>
        <dbReference type="ChEBI" id="CHEBI:29105"/>
    </ligand>
</feature>
<feature type="binding site" evidence="1">
    <location>
        <position position="143"/>
    </location>
    <ligand>
        <name>Zn(2+)</name>
        <dbReference type="ChEBI" id="CHEBI:29105"/>
    </ligand>
</feature>
<feature type="binding site" evidence="1">
    <location>
        <position position="212"/>
    </location>
    <ligand>
        <name>Zn(2+)</name>
        <dbReference type="ChEBI" id="CHEBI:29105"/>
    </ligand>
</feature>
<keyword id="KW-0963">Cytoplasm</keyword>
<keyword id="KW-0456">Lyase</keyword>
<keyword id="KW-0479">Metal-binding</keyword>
<keyword id="KW-0684">Rhamnose metabolism</keyword>
<keyword id="KW-0862">Zinc</keyword>
<proteinExistence type="inferred from homology"/>
<reference key="1">
    <citation type="journal article" date="2005" name="Nucleic Acids Res.">
        <title>Genome dynamics and diversity of Shigella species, the etiologic agents of bacillary dysentery.</title>
        <authorList>
            <person name="Yang F."/>
            <person name="Yang J."/>
            <person name="Zhang X."/>
            <person name="Chen L."/>
            <person name="Jiang Y."/>
            <person name="Yan Y."/>
            <person name="Tang X."/>
            <person name="Wang J."/>
            <person name="Xiong Z."/>
            <person name="Dong J."/>
            <person name="Xue Y."/>
            <person name="Zhu Y."/>
            <person name="Xu X."/>
            <person name="Sun L."/>
            <person name="Chen S."/>
            <person name="Nie H."/>
            <person name="Peng J."/>
            <person name="Xu J."/>
            <person name="Wang Y."/>
            <person name="Yuan Z."/>
            <person name="Wen Y."/>
            <person name="Yao Z."/>
            <person name="Shen Y."/>
            <person name="Qiang B."/>
            <person name="Hou Y."/>
            <person name="Yu J."/>
            <person name="Jin Q."/>
        </authorList>
    </citation>
    <scope>NUCLEOTIDE SEQUENCE [LARGE SCALE GENOMIC DNA]</scope>
    <source>
        <strain>Sb227</strain>
    </source>
</reference>
<evidence type="ECO:0000255" key="1">
    <source>
        <dbReference type="HAMAP-Rule" id="MF_00770"/>
    </source>
</evidence>
<comment type="function">
    <text evidence="1">Catalyzes the reversible cleavage of L-rhamnulose-1-phosphate to dihydroxyacetone phosphate (DHAP) and L-lactaldehyde.</text>
</comment>
<comment type="catalytic activity">
    <reaction evidence="1">
        <text>L-rhamnulose 1-phosphate = (S)-lactaldehyde + dihydroxyacetone phosphate</text>
        <dbReference type="Rhea" id="RHEA:19689"/>
        <dbReference type="ChEBI" id="CHEBI:18041"/>
        <dbReference type="ChEBI" id="CHEBI:57642"/>
        <dbReference type="ChEBI" id="CHEBI:58313"/>
        <dbReference type="EC" id="4.1.2.19"/>
    </reaction>
</comment>
<comment type="cofactor">
    <cofactor evidence="1">
        <name>Zn(2+)</name>
        <dbReference type="ChEBI" id="CHEBI:29105"/>
    </cofactor>
    <text evidence="1">Binds 1 zinc ion per subunit.</text>
</comment>
<comment type="pathway">
    <text evidence="1">Carbohydrate degradation; L-rhamnose degradation; glycerone phosphate from L-rhamnose: step 3/3.</text>
</comment>
<comment type="subunit">
    <text evidence="1">Homotetramer.</text>
</comment>
<comment type="subcellular location">
    <subcellularLocation>
        <location evidence="1">Cytoplasm</location>
    </subcellularLocation>
</comment>
<comment type="similarity">
    <text evidence="1">Belongs to the aldolase class II family. RhaD subfamily.</text>
</comment>
<sequence length="274" mass="30007">MQNITQSWFVQGMIKATTDAWLKGWDERNGGNLTLRLDDADIAPYKDNVHAQPRYIPLSQPMPLLANTPFIVTGSGKFFRNVQLDPAANLGVVKVDSDGAGYHILWGLTNEAVPTSELPAHFLSHCERIKATNGKDRVIMHCHATNLIALTYVLENDTAVFTRQLWEGSTECLVVFPDGVGILPWMVPGTDEIGQATAQEMQKHSLVLWPFHGVFGSGSTLDETFGLIDTAEKSAQVLVKVYSMGGMKQTISREELIALGKRFGVTPLASALAL</sequence>